<feature type="chain" id="PRO_1000214122" description="Pimeloyl-[acyl-carrier protein] methyl ester esterase">
    <location>
        <begin position="1"/>
        <end position="254"/>
    </location>
</feature>
<feature type="domain" description="AB hydrolase-1" evidence="1">
    <location>
        <begin position="14"/>
        <end position="242"/>
    </location>
</feature>
<feature type="active site" description="Nucleophile" evidence="2">
    <location>
        <position position="82"/>
    </location>
</feature>
<feature type="active site" evidence="2">
    <location>
        <position position="207"/>
    </location>
</feature>
<feature type="active site" evidence="2">
    <location>
        <position position="235"/>
    </location>
</feature>
<feature type="binding site" evidence="2">
    <location>
        <position position="20"/>
    </location>
    <ligand>
        <name>substrate</name>
    </ligand>
</feature>
<feature type="binding site" evidence="2">
    <location>
        <begin position="82"/>
        <end position="83"/>
    </location>
    <ligand>
        <name>substrate</name>
    </ligand>
</feature>
<feature type="binding site" evidence="2">
    <location>
        <begin position="143"/>
        <end position="147"/>
    </location>
    <ligand>
        <name>substrate</name>
    </ligand>
</feature>
<feature type="binding site" evidence="2">
    <location>
        <position position="235"/>
    </location>
    <ligand>
        <name>substrate</name>
    </ligand>
</feature>
<accession>A0KF11</accession>
<proteinExistence type="inferred from homology"/>
<evidence type="ECO:0000255" key="1"/>
<evidence type="ECO:0000255" key="2">
    <source>
        <dbReference type="HAMAP-Rule" id="MF_01260"/>
    </source>
</evidence>
<protein>
    <recommendedName>
        <fullName evidence="2">Pimeloyl-[acyl-carrier protein] methyl ester esterase</fullName>
        <ecNumber evidence="2">3.1.1.85</ecNumber>
    </recommendedName>
    <alternativeName>
        <fullName evidence="2">Biotin synthesis protein BioH</fullName>
    </alternativeName>
    <alternativeName>
        <fullName evidence="2">Carboxylesterase BioH</fullName>
    </alternativeName>
</protein>
<reference key="1">
    <citation type="journal article" date="2006" name="J. Bacteriol.">
        <title>Genome sequence of Aeromonas hydrophila ATCC 7966T: jack of all trades.</title>
        <authorList>
            <person name="Seshadri R."/>
            <person name="Joseph S.W."/>
            <person name="Chopra A.K."/>
            <person name="Sha J."/>
            <person name="Shaw J."/>
            <person name="Graf J."/>
            <person name="Haft D.H."/>
            <person name="Wu M."/>
            <person name="Ren Q."/>
            <person name="Rosovitz M.J."/>
            <person name="Madupu R."/>
            <person name="Tallon L."/>
            <person name="Kim M."/>
            <person name="Jin S."/>
            <person name="Vuong H."/>
            <person name="Stine O.C."/>
            <person name="Ali A."/>
            <person name="Horneman A.J."/>
            <person name="Heidelberg J.F."/>
        </authorList>
    </citation>
    <scope>NUCLEOTIDE SEQUENCE [LARGE SCALE GENOMIC DNA]</scope>
    <source>
        <strain>ATCC 7966 / DSM 30187 / BCRC 13018 / CCUG 14551 / JCM 1027 / KCTC 2358 / NCIMB 9240 / NCTC 8049</strain>
    </source>
</reference>
<gene>
    <name evidence="2" type="primary">bioH</name>
    <name type="ordered locus">AHA_0299</name>
</gene>
<name>BIOH_AERHH</name>
<keyword id="KW-0093">Biotin biosynthesis</keyword>
<keyword id="KW-0963">Cytoplasm</keyword>
<keyword id="KW-0378">Hydrolase</keyword>
<keyword id="KW-1185">Reference proteome</keyword>
<keyword id="KW-0719">Serine esterase</keyword>
<dbReference type="EC" id="3.1.1.85" evidence="2"/>
<dbReference type="EMBL" id="CP000462">
    <property type="protein sequence ID" value="ABK36065.1"/>
    <property type="molecule type" value="Genomic_DNA"/>
</dbReference>
<dbReference type="RefSeq" id="WP_011704304.1">
    <property type="nucleotide sequence ID" value="NC_008570.1"/>
</dbReference>
<dbReference type="RefSeq" id="YP_854829.1">
    <property type="nucleotide sequence ID" value="NC_008570.1"/>
</dbReference>
<dbReference type="SMR" id="A0KF11"/>
<dbReference type="STRING" id="380703.AHA_0299"/>
<dbReference type="ESTHER" id="aerhh-a0kf11">
    <property type="family name" value="BioH"/>
</dbReference>
<dbReference type="EnsemblBacteria" id="ABK36065">
    <property type="protein sequence ID" value="ABK36065"/>
    <property type="gene ID" value="AHA_0299"/>
</dbReference>
<dbReference type="GeneID" id="4488758"/>
<dbReference type="KEGG" id="aha:AHA_0299"/>
<dbReference type="PATRIC" id="fig|380703.7.peg.287"/>
<dbReference type="eggNOG" id="COG0596">
    <property type="taxonomic scope" value="Bacteria"/>
</dbReference>
<dbReference type="HOGENOM" id="CLU_020336_12_2_6"/>
<dbReference type="OrthoDB" id="9780744at2"/>
<dbReference type="UniPathway" id="UPA00078"/>
<dbReference type="Proteomes" id="UP000000756">
    <property type="component" value="Chromosome"/>
</dbReference>
<dbReference type="GO" id="GO:0005737">
    <property type="term" value="C:cytoplasm"/>
    <property type="evidence" value="ECO:0007669"/>
    <property type="project" value="UniProtKB-SubCell"/>
</dbReference>
<dbReference type="GO" id="GO:0090499">
    <property type="term" value="F:pimelyl-[acyl-carrier protein] methyl ester esterase activity"/>
    <property type="evidence" value="ECO:0007669"/>
    <property type="project" value="UniProtKB-EC"/>
</dbReference>
<dbReference type="GO" id="GO:0009102">
    <property type="term" value="P:biotin biosynthetic process"/>
    <property type="evidence" value="ECO:0007669"/>
    <property type="project" value="UniProtKB-UniRule"/>
</dbReference>
<dbReference type="Gene3D" id="3.40.50.1820">
    <property type="entry name" value="alpha/beta hydrolase"/>
    <property type="match status" value="1"/>
</dbReference>
<dbReference type="HAMAP" id="MF_01260">
    <property type="entry name" value="Carboxylester"/>
    <property type="match status" value="1"/>
</dbReference>
<dbReference type="InterPro" id="IPR000073">
    <property type="entry name" value="AB_hydrolase_1"/>
</dbReference>
<dbReference type="InterPro" id="IPR029058">
    <property type="entry name" value="AB_hydrolase_fold"/>
</dbReference>
<dbReference type="InterPro" id="IPR010076">
    <property type="entry name" value="BioH"/>
</dbReference>
<dbReference type="InterPro" id="IPR050228">
    <property type="entry name" value="Carboxylesterase_BioH"/>
</dbReference>
<dbReference type="NCBIfam" id="TIGR01738">
    <property type="entry name" value="bioH"/>
    <property type="match status" value="1"/>
</dbReference>
<dbReference type="PANTHER" id="PTHR43194">
    <property type="entry name" value="HYDROLASE ALPHA/BETA FOLD FAMILY"/>
    <property type="match status" value="1"/>
</dbReference>
<dbReference type="PANTHER" id="PTHR43194:SF5">
    <property type="entry name" value="PIMELOYL-[ACYL-CARRIER PROTEIN] METHYL ESTER ESTERASE"/>
    <property type="match status" value="1"/>
</dbReference>
<dbReference type="Pfam" id="PF00561">
    <property type="entry name" value="Abhydrolase_1"/>
    <property type="match status" value="1"/>
</dbReference>
<dbReference type="PRINTS" id="PR00111">
    <property type="entry name" value="ABHYDROLASE"/>
</dbReference>
<dbReference type="SUPFAM" id="SSF53474">
    <property type="entry name" value="alpha/beta-Hydrolases"/>
    <property type="match status" value="1"/>
</dbReference>
<comment type="function">
    <text evidence="2">The physiological role of BioH is to remove the methyl group introduced by BioC when the pimeloyl moiety is complete. It allows to synthesize pimeloyl-ACP via the fatty acid synthetic pathway through the hydrolysis of the ester bonds of pimeloyl-ACP esters.</text>
</comment>
<comment type="catalytic activity">
    <reaction evidence="2">
        <text>6-carboxyhexanoyl-[ACP] methyl ester + H2O = 6-carboxyhexanoyl-[ACP] + methanol + H(+)</text>
        <dbReference type="Rhea" id="RHEA:42700"/>
        <dbReference type="Rhea" id="RHEA-COMP:9955"/>
        <dbReference type="Rhea" id="RHEA-COMP:10186"/>
        <dbReference type="ChEBI" id="CHEBI:15377"/>
        <dbReference type="ChEBI" id="CHEBI:15378"/>
        <dbReference type="ChEBI" id="CHEBI:17790"/>
        <dbReference type="ChEBI" id="CHEBI:78846"/>
        <dbReference type="ChEBI" id="CHEBI:82735"/>
        <dbReference type="EC" id="3.1.1.85"/>
    </reaction>
</comment>
<comment type="pathway">
    <text evidence="2">Cofactor biosynthesis; biotin biosynthesis.</text>
</comment>
<comment type="subunit">
    <text evidence="2">Monomer.</text>
</comment>
<comment type="subcellular location">
    <subcellularLocation>
        <location evidence="2">Cytoplasm</location>
    </subcellularLocation>
</comment>
<comment type="similarity">
    <text evidence="2">Belongs to the AB hydrolase superfamily. Carboxylesterase BioH family.</text>
</comment>
<sequence length="254" mass="27945">MSVSVERFGQGPDLVLLHGWGMNGAVWHGIVPALASRYRVHLVDLPGFGNSPLAGEVEYSLPWLAEEVAAILPEQCHLLGWSLGGLVASQLALSHPERLHSLITVASSPCFMARDEWPGIAPKVLAGFNQMLAGDFKQTIERFLAIQAMGSEHARDDIRQLRHWLAERPAPQLAALEAGLGLLAEVDLRDELTPLSLPWLRVYGRLDSLVPKASIPLLDERYPSSRSVVLEKASHAPFISHPQQFIEIIEHFVG</sequence>
<organism>
    <name type="scientific">Aeromonas hydrophila subsp. hydrophila (strain ATCC 7966 / DSM 30187 / BCRC 13018 / CCUG 14551 / JCM 1027 / KCTC 2358 / NCIMB 9240 / NCTC 8049)</name>
    <dbReference type="NCBI Taxonomy" id="380703"/>
    <lineage>
        <taxon>Bacteria</taxon>
        <taxon>Pseudomonadati</taxon>
        <taxon>Pseudomonadota</taxon>
        <taxon>Gammaproteobacteria</taxon>
        <taxon>Aeromonadales</taxon>
        <taxon>Aeromonadaceae</taxon>
        <taxon>Aeromonas</taxon>
    </lineage>
</organism>